<feature type="chain" id="PRO_1000058332" description="ATP-dependent Clp protease ATP-binding subunit ClpX">
    <location>
        <begin position="1"/>
        <end position="421"/>
    </location>
</feature>
<feature type="domain" description="ClpX-type ZB" evidence="2">
    <location>
        <begin position="1"/>
        <end position="54"/>
    </location>
</feature>
<feature type="binding site" evidence="2">
    <location>
        <position position="13"/>
    </location>
    <ligand>
        <name>Zn(2+)</name>
        <dbReference type="ChEBI" id="CHEBI:29105"/>
    </ligand>
</feature>
<feature type="binding site" evidence="2">
    <location>
        <position position="16"/>
    </location>
    <ligand>
        <name>Zn(2+)</name>
        <dbReference type="ChEBI" id="CHEBI:29105"/>
    </ligand>
</feature>
<feature type="binding site" evidence="2">
    <location>
        <position position="35"/>
    </location>
    <ligand>
        <name>Zn(2+)</name>
        <dbReference type="ChEBI" id="CHEBI:29105"/>
    </ligand>
</feature>
<feature type="binding site" evidence="2">
    <location>
        <position position="38"/>
    </location>
    <ligand>
        <name>Zn(2+)</name>
        <dbReference type="ChEBI" id="CHEBI:29105"/>
    </ligand>
</feature>
<feature type="binding site" evidence="1">
    <location>
        <begin position="117"/>
        <end position="124"/>
    </location>
    <ligand>
        <name>ATP</name>
        <dbReference type="ChEBI" id="CHEBI:30616"/>
    </ligand>
</feature>
<protein>
    <recommendedName>
        <fullName evidence="1">ATP-dependent Clp protease ATP-binding subunit ClpX</fullName>
    </recommendedName>
</protein>
<gene>
    <name evidence="1" type="primary">clpX</name>
    <name type="ordered locus">BPUM_2463</name>
</gene>
<name>CLPX_BACP2</name>
<comment type="function">
    <text evidence="1">ATP-dependent specificity component of the Clp protease. It directs the protease to specific substrates. Can perform chaperone functions in the absence of ClpP.</text>
</comment>
<comment type="subunit">
    <text evidence="1">Component of the ClpX-ClpP complex. Forms a hexameric ring that, in the presence of ATP, binds to fourteen ClpP subunits assembled into a disk-like structure with a central cavity, resembling the structure of eukaryotic proteasomes.</text>
</comment>
<comment type="similarity">
    <text evidence="1">Belongs to the ClpX chaperone family.</text>
</comment>
<keyword id="KW-0067">ATP-binding</keyword>
<keyword id="KW-0143">Chaperone</keyword>
<keyword id="KW-0479">Metal-binding</keyword>
<keyword id="KW-0547">Nucleotide-binding</keyword>
<keyword id="KW-0862">Zinc</keyword>
<evidence type="ECO:0000255" key="1">
    <source>
        <dbReference type="HAMAP-Rule" id="MF_00175"/>
    </source>
</evidence>
<evidence type="ECO:0000255" key="2">
    <source>
        <dbReference type="PROSITE-ProRule" id="PRU01250"/>
    </source>
</evidence>
<accession>A8FFV9</accession>
<proteinExistence type="inferred from homology"/>
<reference key="1">
    <citation type="journal article" date="2007" name="PLoS ONE">
        <title>Paradoxical DNA repair and peroxide resistance gene conservation in Bacillus pumilus SAFR-032.</title>
        <authorList>
            <person name="Gioia J."/>
            <person name="Yerrapragada S."/>
            <person name="Qin X."/>
            <person name="Jiang H."/>
            <person name="Igboeli O.C."/>
            <person name="Muzny D."/>
            <person name="Dugan-Rocha S."/>
            <person name="Ding Y."/>
            <person name="Hawes A."/>
            <person name="Liu W."/>
            <person name="Perez L."/>
            <person name="Kovar C."/>
            <person name="Dinh H."/>
            <person name="Lee S."/>
            <person name="Nazareth L."/>
            <person name="Blyth P."/>
            <person name="Holder M."/>
            <person name="Buhay C."/>
            <person name="Tirumalai M.R."/>
            <person name="Liu Y."/>
            <person name="Dasgupta I."/>
            <person name="Bokhetache L."/>
            <person name="Fujita M."/>
            <person name="Karouia F."/>
            <person name="Eswara Moorthy P."/>
            <person name="Siefert J."/>
            <person name="Uzman A."/>
            <person name="Buzumbo P."/>
            <person name="Verma A."/>
            <person name="Zwiya H."/>
            <person name="McWilliams B.D."/>
            <person name="Olowu A."/>
            <person name="Clinkenbeard K.D."/>
            <person name="Newcombe D."/>
            <person name="Golebiewski L."/>
            <person name="Petrosino J.F."/>
            <person name="Nicholson W.L."/>
            <person name="Fox G.E."/>
            <person name="Venkateswaran K."/>
            <person name="Highlander S.K."/>
            <person name="Weinstock G.M."/>
        </authorList>
    </citation>
    <scope>NUCLEOTIDE SEQUENCE [LARGE SCALE GENOMIC DNA]</scope>
    <source>
        <strain>SAFR-032</strain>
    </source>
</reference>
<dbReference type="EMBL" id="CP000813">
    <property type="protein sequence ID" value="ABV63126.1"/>
    <property type="molecule type" value="Genomic_DNA"/>
</dbReference>
<dbReference type="RefSeq" id="WP_012010785.1">
    <property type="nucleotide sequence ID" value="NZ_VEIS01000010.1"/>
</dbReference>
<dbReference type="SMR" id="A8FFV9"/>
<dbReference type="STRING" id="315750.BPUM_2463"/>
<dbReference type="GeneID" id="5621727"/>
<dbReference type="KEGG" id="bpu:BPUM_2463"/>
<dbReference type="eggNOG" id="COG1219">
    <property type="taxonomic scope" value="Bacteria"/>
</dbReference>
<dbReference type="HOGENOM" id="CLU_014218_8_2_9"/>
<dbReference type="OrthoDB" id="9804062at2"/>
<dbReference type="Proteomes" id="UP000001355">
    <property type="component" value="Chromosome"/>
</dbReference>
<dbReference type="GO" id="GO:0009376">
    <property type="term" value="C:HslUV protease complex"/>
    <property type="evidence" value="ECO:0007669"/>
    <property type="project" value="TreeGrafter"/>
</dbReference>
<dbReference type="GO" id="GO:0005524">
    <property type="term" value="F:ATP binding"/>
    <property type="evidence" value="ECO:0007669"/>
    <property type="project" value="UniProtKB-UniRule"/>
</dbReference>
<dbReference type="GO" id="GO:0016887">
    <property type="term" value="F:ATP hydrolysis activity"/>
    <property type="evidence" value="ECO:0007669"/>
    <property type="project" value="InterPro"/>
</dbReference>
<dbReference type="GO" id="GO:0140662">
    <property type="term" value="F:ATP-dependent protein folding chaperone"/>
    <property type="evidence" value="ECO:0007669"/>
    <property type="project" value="InterPro"/>
</dbReference>
<dbReference type="GO" id="GO:0046983">
    <property type="term" value="F:protein dimerization activity"/>
    <property type="evidence" value="ECO:0007669"/>
    <property type="project" value="InterPro"/>
</dbReference>
<dbReference type="GO" id="GO:0051082">
    <property type="term" value="F:unfolded protein binding"/>
    <property type="evidence" value="ECO:0007669"/>
    <property type="project" value="UniProtKB-UniRule"/>
</dbReference>
<dbReference type="GO" id="GO:0008270">
    <property type="term" value="F:zinc ion binding"/>
    <property type="evidence" value="ECO:0007669"/>
    <property type="project" value="InterPro"/>
</dbReference>
<dbReference type="GO" id="GO:0051301">
    <property type="term" value="P:cell division"/>
    <property type="evidence" value="ECO:0007669"/>
    <property type="project" value="TreeGrafter"/>
</dbReference>
<dbReference type="GO" id="GO:0051603">
    <property type="term" value="P:proteolysis involved in protein catabolic process"/>
    <property type="evidence" value="ECO:0007669"/>
    <property type="project" value="TreeGrafter"/>
</dbReference>
<dbReference type="CDD" id="cd19497">
    <property type="entry name" value="RecA-like_ClpX"/>
    <property type="match status" value="1"/>
</dbReference>
<dbReference type="FunFam" id="1.10.8.60:FF:000002">
    <property type="entry name" value="ATP-dependent Clp protease ATP-binding subunit ClpX"/>
    <property type="match status" value="1"/>
</dbReference>
<dbReference type="FunFam" id="3.40.50.300:FF:000005">
    <property type="entry name" value="ATP-dependent Clp protease ATP-binding subunit ClpX"/>
    <property type="match status" value="1"/>
</dbReference>
<dbReference type="Gene3D" id="1.10.8.60">
    <property type="match status" value="1"/>
</dbReference>
<dbReference type="Gene3D" id="6.20.220.10">
    <property type="entry name" value="ClpX chaperone, C4-type zinc finger domain"/>
    <property type="match status" value="1"/>
</dbReference>
<dbReference type="Gene3D" id="3.40.50.300">
    <property type="entry name" value="P-loop containing nucleotide triphosphate hydrolases"/>
    <property type="match status" value="1"/>
</dbReference>
<dbReference type="HAMAP" id="MF_00175">
    <property type="entry name" value="ClpX"/>
    <property type="match status" value="1"/>
</dbReference>
<dbReference type="InterPro" id="IPR003593">
    <property type="entry name" value="AAA+_ATPase"/>
</dbReference>
<dbReference type="InterPro" id="IPR050052">
    <property type="entry name" value="ATP-dep_Clp_protease_ClpX"/>
</dbReference>
<dbReference type="InterPro" id="IPR003959">
    <property type="entry name" value="ATPase_AAA_core"/>
</dbReference>
<dbReference type="InterPro" id="IPR019489">
    <property type="entry name" value="Clp_ATPase_C"/>
</dbReference>
<dbReference type="InterPro" id="IPR004487">
    <property type="entry name" value="Clp_protease_ATP-bd_su_ClpX"/>
</dbReference>
<dbReference type="InterPro" id="IPR046425">
    <property type="entry name" value="ClpX_bact"/>
</dbReference>
<dbReference type="InterPro" id="IPR027417">
    <property type="entry name" value="P-loop_NTPase"/>
</dbReference>
<dbReference type="InterPro" id="IPR010603">
    <property type="entry name" value="Znf_CppX_C4"/>
</dbReference>
<dbReference type="InterPro" id="IPR038366">
    <property type="entry name" value="Znf_CppX_C4_sf"/>
</dbReference>
<dbReference type="NCBIfam" id="TIGR00382">
    <property type="entry name" value="clpX"/>
    <property type="match status" value="1"/>
</dbReference>
<dbReference type="NCBIfam" id="NF003745">
    <property type="entry name" value="PRK05342.1"/>
    <property type="match status" value="1"/>
</dbReference>
<dbReference type="PANTHER" id="PTHR48102:SF7">
    <property type="entry name" value="ATP-DEPENDENT CLP PROTEASE ATP-BINDING SUBUNIT CLPX-LIKE, MITOCHONDRIAL"/>
    <property type="match status" value="1"/>
</dbReference>
<dbReference type="PANTHER" id="PTHR48102">
    <property type="entry name" value="ATP-DEPENDENT CLP PROTEASE ATP-BINDING SUBUNIT CLPX-LIKE, MITOCHONDRIAL-RELATED"/>
    <property type="match status" value="1"/>
</dbReference>
<dbReference type="Pfam" id="PF07724">
    <property type="entry name" value="AAA_2"/>
    <property type="match status" value="1"/>
</dbReference>
<dbReference type="Pfam" id="PF10431">
    <property type="entry name" value="ClpB_D2-small"/>
    <property type="match status" value="1"/>
</dbReference>
<dbReference type="Pfam" id="PF06689">
    <property type="entry name" value="zf-C4_ClpX"/>
    <property type="match status" value="1"/>
</dbReference>
<dbReference type="SMART" id="SM00382">
    <property type="entry name" value="AAA"/>
    <property type="match status" value="1"/>
</dbReference>
<dbReference type="SMART" id="SM01086">
    <property type="entry name" value="ClpB_D2-small"/>
    <property type="match status" value="1"/>
</dbReference>
<dbReference type="SMART" id="SM00994">
    <property type="entry name" value="zf-C4_ClpX"/>
    <property type="match status" value="1"/>
</dbReference>
<dbReference type="SUPFAM" id="SSF57716">
    <property type="entry name" value="Glucocorticoid receptor-like (DNA-binding domain)"/>
    <property type="match status" value="1"/>
</dbReference>
<dbReference type="SUPFAM" id="SSF52540">
    <property type="entry name" value="P-loop containing nucleoside triphosphate hydrolases"/>
    <property type="match status" value="1"/>
</dbReference>
<dbReference type="PROSITE" id="PS51902">
    <property type="entry name" value="CLPX_ZB"/>
    <property type="match status" value="1"/>
</dbReference>
<sequence length="421" mass="46500">MFKFNEEKGQLKCSFCGKTQDQVRKLVAGPGVYICDECIELCTEIVEEELGTEEEVEFKDVPKPHEIREILDEYVIGQENAKKSLAVAVYNHYKRINSNSKIDDVELSKSNISMIGPTGSGKTLLAQTLARILNVPFAIADATSLTEAGYVGEDVENILLKLIQAADYDVEKAEKGIIYIDEIDKVARKSENPSITRDVSGEGVQQALLKILEGTVASVPPQGGRKHPHQEFIQIDTTNILFICGGAFDGIEQIIKRRLGQKVIGFGAENKIEDLEKEVLLSKVLPEDLLRFGLIPEFIGRLPVIASLEPLDEKALVEILTKPKNALVKQYTKMLELDDVELEFEEDALSEIAKKAIERKTGARGLRSIIEGIMLDVMFDLPSRDDIEKCVITGATVADGESPRLVLKDGTVVNKDTKTSA</sequence>
<organism>
    <name type="scientific">Bacillus pumilus (strain SAFR-032)</name>
    <dbReference type="NCBI Taxonomy" id="315750"/>
    <lineage>
        <taxon>Bacteria</taxon>
        <taxon>Bacillati</taxon>
        <taxon>Bacillota</taxon>
        <taxon>Bacilli</taxon>
        <taxon>Bacillales</taxon>
        <taxon>Bacillaceae</taxon>
        <taxon>Bacillus</taxon>
    </lineage>
</organism>